<comment type="function">
    <text evidence="1">Promotes the exchange of Ras-bound GDP by GTP.</text>
</comment>
<comment type="developmental stage">
    <text evidence="6">Expressed during development; especially from 4 hours of development and with a peak of expression at 12 hours of development.</text>
</comment>
<comment type="sequence caution" evidence="7">
    <conflict type="frameshift">
        <sequence resource="EMBL-CDS" id="AAL83292"/>
    </conflict>
</comment>
<evidence type="ECO:0000250" key="1"/>
<evidence type="ECO:0000255" key="2"/>
<evidence type="ECO:0000255" key="3">
    <source>
        <dbReference type="PROSITE-ProRule" id="PRU00135"/>
    </source>
</evidence>
<evidence type="ECO:0000255" key="4">
    <source>
        <dbReference type="PROSITE-ProRule" id="PRU00168"/>
    </source>
</evidence>
<evidence type="ECO:0000256" key="5">
    <source>
        <dbReference type="SAM" id="MobiDB-lite"/>
    </source>
</evidence>
<evidence type="ECO:0000269" key="6">
    <source>
    </source>
</evidence>
<evidence type="ECO:0000305" key="7"/>
<keyword id="KW-0175">Coiled coil</keyword>
<keyword id="KW-0344">Guanine-nucleotide releasing factor</keyword>
<keyword id="KW-1185">Reference proteome</keyword>
<name>GEFK_DICDI</name>
<reference key="1">
    <citation type="journal article" date="2005" name="Genome Biol.">
        <title>The Dictyostelium genome encodes numerous RasGEFs with multiple biological roles.</title>
        <authorList>
            <person name="Wilkins A."/>
            <person name="Szafranski K."/>
            <person name="Fraser D.J."/>
            <person name="Bakthavatsalam D."/>
            <person name="Mueller R."/>
            <person name="Fisher P.R."/>
            <person name="Gloeckner G."/>
            <person name="Eichinger L."/>
            <person name="Noegel A.A."/>
            <person name="Insall R.H."/>
        </authorList>
    </citation>
    <scope>NUCLEOTIDE SEQUENCE [GENOMIC DNA]</scope>
    <scope>DEVELOPMENTAL STAGE</scope>
    <source>
        <strain>AX4</strain>
    </source>
</reference>
<reference key="2">
    <citation type="journal article" date="2005" name="Nature">
        <title>The genome of the social amoeba Dictyostelium discoideum.</title>
        <authorList>
            <person name="Eichinger L."/>
            <person name="Pachebat J.A."/>
            <person name="Gloeckner G."/>
            <person name="Rajandream M.A."/>
            <person name="Sucgang R."/>
            <person name="Berriman M."/>
            <person name="Song J."/>
            <person name="Olsen R."/>
            <person name="Szafranski K."/>
            <person name="Xu Q."/>
            <person name="Tunggal B."/>
            <person name="Kummerfeld S."/>
            <person name="Madera M."/>
            <person name="Konfortov B.A."/>
            <person name="Rivero F."/>
            <person name="Bankier A.T."/>
            <person name="Lehmann R."/>
            <person name="Hamlin N."/>
            <person name="Davies R."/>
            <person name="Gaudet P."/>
            <person name="Fey P."/>
            <person name="Pilcher K."/>
            <person name="Chen G."/>
            <person name="Saunders D."/>
            <person name="Sodergren E.J."/>
            <person name="Davis P."/>
            <person name="Kerhornou A."/>
            <person name="Nie X."/>
            <person name="Hall N."/>
            <person name="Anjard C."/>
            <person name="Hemphill L."/>
            <person name="Bason N."/>
            <person name="Farbrother P."/>
            <person name="Desany B."/>
            <person name="Just E."/>
            <person name="Morio T."/>
            <person name="Rost R."/>
            <person name="Churcher C.M."/>
            <person name="Cooper J."/>
            <person name="Haydock S."/>
            <person name="van Driessche N."/>
            <person name="Cronin A."/>
            <person name="Goodhead I."/>
            <person name="Muzny D.M."/>
            <person name="Mourier T."/>
            <person name="Pain A."/>
            <person name="Lu M."/>
            <person name="Harper D."/>
            <person name="Lindsay R."/>
            <person name="Hauser H."/>
            <person name="James K.D."/>
            <person name="Quiles M."/>
            <person name="Madan Babu M."/>
            <person name="Saito T."/>
            <person name="Buchrieser C."/>
            <person name="Wardroper A."/>
            <person name="Felder M."/>
            <person name="Thangavelu M."/>
            <person name="Johnson D."/>
            <person name="Knights A."/>
            <person name="Loulseged H."/>
            <person name="Mungall K.L."/>
            <person name="Oliver K."/>
            <person name="Price C."/>
            <person name="Quail M.A."/>
            <person name="Urushihara H."/>
            <person name="Hernandez J."/>
            <person name="Rabbinowitsch E."/>
            <person name="Steffen D."/>
            <person name="Sanders M."/>
            <person name="Ma J."/>
            <person name="Kohara Y."/>
            <person name="Sharp S."/>
            <person name="Simmonds M.N."/>
            <person name="Spiegler S."/>
            <person name="Tivey A."/>
            <person name="Sugano S."/>
            <person name="White B."/>
            <person name="Walker D."/>
            <person name="Woodward J.R."/>
            <person name="Winckler T."/>
            <person name="Tanaka Y."/>
            <person name="Shaulsky G."/>
            <person name="Schleicher M."/>
            <person name="Weinstock G.M."/>
            <person name="Rosenthal A."/>
            <person name="Cox E.C."/>
            <person name="Chisholm R.L."/>
            <person name="Gibbs R.A."/>
            <person name="Loomis W.F."/>
            <person name="Platzer M."/>
            <person name="Kay R.R."/>
            <person name="Williams J.G."/>
            <person name="Dear P.H."/>
            <person name="Noegel A.A."/>
            <person name="Barrell B.G."/>
            <person name="Kuspa A."/>
        </authorList>
    </citation>
    <scope>NUCLEOTIDE SEQUENCE [LARGE SCALE GENOMIC DNA]</scope>
    <source>
        <strain>AX4</strain>
    </source>
</reference>
<reference key="3">
    <citation type="submission" date="2002-01" db="EMBL/GenBank/DDBJ databases">
        <title>RasgefK, a new member of the Dictyostelium discoideum Rasgef family.</title>
        <authorList>
            <person name="Mueller R."/>
            <person name="Eichinger L."/>
            <person name="Noegel A.A."/>
        </authorList>
    </citation>
    <scope>NUCLEOTIDE SEQUENCE [MRNA] OF 167-1557</scope>
    <source>
        <strain>AX2</strain>
    </source>
</reference>
<accession>Q54FF3</accession>
<accession>Q8IS13</accession>
<accession>Q8T6G6</accession>
<protein>
    <recommendedName>
        <fullName>Ras guanine nucleotide exchange factor K</fullName>
    </recommendedName>
    <alternativeName>
        <fullName>RasGEF domain-containing protein K</fullName>
    </alternativeName>
</protein>
<dbReference type="EMBL" id="AY160100">
    <property type="protein sequence ID" value="AAN46880.1"/>
    <property type="molecule type" value="Genomic_DNA"/>
</dbReference>
<dbReference type="EMBL" id="AAFI02000172">
    <property type="protein sequence ID" value="EAL61966.1"/>
    <property type="molecule type" value="Genomic_DNA"/>
</dbReference>
<dbReference type="EMBL" id="AF474377">
    <property type="protein sequence ID" value="AAL83292.1"/>
    <property type="status" value="ALT_FRAME"/>
    <property type="molecule type" value="mRNA"/>
</dbReference>
<dbReference type="RefSeq" id="XP_635469.1">
    <property type="nucleotide sequence ID" value="XM_630377.1"/>
</dbReference>
<dbReference type="SMR" id="Q54FF3"/>
<dbReference type="FunCoup" id="Q54FF3">
    <property type="interactions" value="140"/>
</dbReference>
<dbReference type="STRING" id="44689.Q54FF3"/>
<dbReference type="PaxDb" id="44689-DDB0191358"/>
<dbReference type="EnsemblProtists" id="EAL61966">
    <property type="protein sequence ID" value="EAL61966"/>
    <property type="gene ID" value="DDB_G0290901"/>
</dbReference>
<dbReference type="GeneID" id="8627885"/>
<dbReference type="KEGG" id="ddi:DDB_G0290901"/>
<dbReference type="dictyBase" id="DDB_G0290901">
    <property type="gene designation" value="gefK"/>
</dbReference>
<dbReference type="VEuPathDB" id="AmoebaDB:DDB_G0290901"/>
<dbReference type="eggNOG" id="KOG3417">
    <property type="taxonomic scope" value="Eukaryota"/>
</dbReference>
<dbReference type="HOGENOM" id="CLU_246117_0_0_1"/>
<dbReference type="InParanoid" id="Q54FF3"/>
<dbReference type="OMA" id="ERQINIW"/>
<dbReference type="Reactome" id="R-DDI-193648">
    <property type="pathway name" value="NRAGE signals death through JNK"/>
</dbReference>
<dbReference type="Reactome" id="R-DDI-9013148">
    <property type="pathway name" value="CDC42 GTPase cycle"/>
</dbReference>
<dbReference type="Reactome" id="R-DDI-9013149">
    <property type="pathway name" value="RAC1 GTPase cycle"/>
</dbReference>
<dbReference type="PRO" id="PR:Q54FF3"/>
<dbReference type="Proteomes" id="UP000002195">
    <property type="component" value="Chromosome 5"/>
</dbReference>
<dbReference type="GO" id="GO:0005886">
    <property type="term" value="C:plasma membrane"/>
    <property type="evidence" value="ECO:0000318"/>
    <property type="project" value="GO_Central"/>
</dbReference>
<dbReference type="GO" id="GO:0005085">
    <property type="term" value="F:guanyl-nucleotide exchange factor activity"/>
    <property type="evidence" value="ECO:0000318"/>
    <property type="project" value="GO_Central"/>
</dbReference>
<dbReference type="GO" id="GO:0007265">
    <property type="term" value="P:Ras protein signal transduction"/>
    <property type="evidence" value="ECO:0000318"/>
    <property type="project" value="GO_Central"/>
</dbReference>
<dbReference type="CDD" id="cd00155">
    <property type="entry name" value="RasGEF"/>
    <property type="match status" value="1"/>
</dbReference>
<dbReference type="CDD" id="cd06224">
    <property type="entry name" value="REM"/>
    <property type="match status" value="1"/>
</dbReference>
<dbReference type="Gene3D" id="3.10.20.90">
    <property type="entry name" value="Phosphatidylinositol 3-kinase Catalytic Subunit, Chain A, domain 1"/>
    <property type="match status" value="1"/>
</dbReference>
<dbReference type="Gene3D" id="1.10.840.10">
    <property type="entry name" value="Ras guanine-nucleotide exchange factors catalytic domain"/>
    <property type="match status" value="1"/>
</dbReference>
<dbReference type="Gene3D" id="1.20.870.10">
    <property type="entry name" value="Son of sevenless (SoS) protein Chain: S domain 1"/>
    <property type="match status" value="2"/>
</dbReference>
<dbReference type="InterPro" id="IPR008937">
    <property type="entry name" value="Ras-like_GEF"/>
</dbReference>
<dbReference type="InterPro" id="IPR000651">
    <property type="entry name" value="Ras-like_Gua-exchang_fac_N"/>
</dbReference>
<dbReference type="InterPro" id="IPR019804">
    <property type="entry name" value="Ras_G-nucl-exch_fac_CS"/>
</dbReference>
<dbReference type="InterPro" id="IPR023578">
    <property type="entry name" value="Ras_GEF_dom_sf"/>
</dbReference>
<dbReference type="InterPro" id="IPR001895">
    <property type="entry name" value="RASGEF_cat_dom"/>
</dbReference>
<dbReference type="InterPro" id="IPR036964">
    <property type="entry name" value="RASGEF_cat_dom_sf"/>
</dbReference>
<dbReference type="PANTHER" id="PTHR23113">
    <property type="entry name" value="GUANINE NUCLEOTIDE EXCHANGE FACTOR"/>
    <property type="match status" value="1"/>
</dbReference>
<dbReference type="PANTHER" id="PTHR23113:SF369">
    <property type="entry name" value="RAS GUANINE NUCLEOTIDE EXCHANGE FACTOR K"/>
    <property type="match status" value="1"/>
</dbReference>
<dbReference type="Pfam" id="PF00617">
    <property type="entry name" value="RasGEF"/>
    <property type="match status" value="1"/>
</dbReference>
<dbReference type="Pfam" id="PF00618">
    <property type="entry name" value="RasGEF_N"/>
    <property type="match status" value="1"/>
</dbReference>
<dbReference type="SMART" id="SM00147">
    <property type="entry name" value="RasGEF"/>
    <property type="match status" value="1"/>
</dbReference>
<dbReference type="SMART" id="SM00229">
    <property type="entry name" value="RasGEFN"/>
    <property type="match status" value="1"/>
</dbReference>
<dbReference type="SUPFAM" id="SSF48366">
    <property type="entry name" value="Ras GEF"/>
    <property type="match status" value="1"/>
</dbReference>
<dbReference type="PROSITE" id="PS00720">
    <property type="entry name" value="RASGEF"/>
    <property type="match status" value="1"/>
</dbReference>
<dbReference type="PROSITE" id="PS50009">
    <property type="entry name" value="RASGEF_CAT"/>
    <property type="match status" value="1"/>
</dbReference>
<dbReference type="PROSITE" id="PS50212">
    <property type="entry name" value="RASGEF_NTER"/>
    <property type="match status" value="1"/>
</dbReference>
<gene>
    <name type="primary">gefK</name>
    <name type="synonym">rasGEFK</name>
    <name type="ORF">DDB_G0290901</name>
</gene>
<proteinExistence type="evidence at transcript level"/>
<organism>
    <name type="scientific">Dictyostelium discoideum</name>
    <name type="common">Social amoeba</name>
    <dbReference type="NCBI Taxonomy" id="44689"/>
    <lineage>
        <taxon>Eukaryota</taxon>
        <taxon>Amoebozoa</taxon>
        <taxon>Evosea</taxon>
        <taxon>Eumycetozoa</taxon>
        <taxon>Dictyostelia</taxon>
        <taxon>Dictyosteliales</taxon>
        <taxon>Dictyosteliaceae</taxon>
        <taxon>Dictyostelium</taxon>
    </lineage>
</organism>
<sequence length="1557" mass="173750">MEPTINPPVNLPPPVPSRSNLSLNYSNNNTNNTNNTNNTNDFKKKLQFQLQSSPSSPSSPSPSIIYKKTPAVNNNNNNNNNNNHINNGNVNGIGPGGGNSYISSPQSSPIHTSSNGISYTVTTNSPPLLPVDNSSGYNNNLNSTFVETLSSSSPSPIKTTTTPPPPVPSKSKSKSSEKLSVKLLKSNSKPSLNDLYQQQQQQSNPNSPTTPPSNCNIESIQPPSSSSSSTTPSTSPQLPAIYSKYSKISLPQLPLPPFLPPSPLVQSTSSPSFSSLILPLPSSPLPPPPLTIPNKVPPLPMRLPPPPPPQQLDQMYSNNNQQQQQQQQQQQNNESNSTTTSEGGLTPESESKLYEIASQPPSTPRLTHESKVIPSEIELLIKFYPSPSLSSGSLLTIPSTIEKSFIFSPCSTVDEILSIIIPNFQFHNGLKCFAKHTFNNEWEATHNDPAAASSSIIDDHESFALFNQKSPTIPLHKEKTILELSLHDRDVLILKTVSLVFTLVKVQIPHFTENSLSATATVKFNQFTSIRSIIRKLYLKYHNNVDISRHGIFLINDNNNNNNNNNNNNNNNNNNNNNNNNNNNNNNNNNNNNNNNNNNNNNNNNNNNNNLHQQQDELSSSIQLEEEELFSTYNINSNSNLVFRTISNQENDILNSSQKILNLKILISSTFSRNNTLNLMFDPRDSVSKAIKVTGLRTGLLDSLNKCGFYLTPSEDDDEGFWMDEELTLEMYNLKNHTFLSFKERCKKYTILIKMGGASNGNGNGDLTWRKCTFKFDQFTKVSTLFNILINNENIKNPKDYHLVVKSTGTSLEKHRYLWSYDIKSPYEIEFKEYPNKLLIFNPQNGEKNFVYVDFNEPIKDVCARLSQTFSSPIDFGSISTNNNNNNNNNNNINSNSNGSSGAGGANSNALTSSTNSASTTSSSTPTTPELPPQVNHVRERSYTFKRLGQLNNTIDSRKSLKDQGVLPNDALMLEVIQDDSIATNNNNNNNNNNSNTTTTIKDKKINRNSLPSSTTMVFEDLVKDGTILSEERQINIWDEPADSNGNIIYSKTVTNNLNAEIDAATLNKLIIRLTNPVFHDLTFMKTFLMTYSSYTTTTTLLKKLFERFQVPTHIDERERLSAQLRVANVIKYWVEHHYEDFCHESTKLMVDFVDTHMMIAFPTLGVQIRNCILKRTCGFKSELVRTRSNGALTSPRTNLSLSFTNLNNSSVGSIANTSSSTSTSSTSSLLSSTNSISISSSLSLSFNSGINSPSISQNTPSSPSLIPSSPRPITSSSSVSSSTLLKSPLSQQAKSRIPETKTKGFANPRNLFDFDDEEIARQLTLYDFQLYTAIKPTEFLNQAWNKPSMASRKSPTILKIISRFNDISLWVVSLILEPDRVKTRAKRLKRIISIADELRKLNNYNTCIAVISGINNSAILRLKYTRGLLSKKYLDILENLEKEMSCEGSYKNYRDKLKNSDPPVVPYIGVYLTDLTFIEEGNPNIIRGNLINFAKYYLIYRVISEIQQYQWTEYQLNVAPIIQTFIRDVSISSTSDDLYHLSLLKEPRNALKSDIF</sequence>
<feature type="chain" id="PRO_0000384469" description="Ras guanine nucleotide exchange factor K">
    <location>
        <begin position="1"/>
        <end position="1557"/>
    </location>
</feature>
<feature type="domain" description="N-terminal Ras-GEF" evidence="3">
    <location>
        <begin position="1058"/>
        <end position="1177"/>
    </location>
</feature>
<feature type="domain" description="Ras-GEF" evidence="4">
    <location>
        <begin position="1316"/>
        <end position="1549"/>
    </location>
</feature>
<feature type="region of interest" description="Disordered" evidence="5">
    <location>
        <begin position="1"/>
        <end position="121"/>
    </location>
</feature>
<feature type="region of interest" description="Disordered" evidence="5">
    <location>
        <begin position="146"/>
        <end position="181"/>
    </location>
</feature>
<feature type="region of interest" description="Disordered" evidence="5">
    <location>
        <begin position="195"/>
        <end position="238"/>
    </location>
</feature>
<feature type="region of interest" description="Disordered" evidence="5">
    <location>
        <begin position="283"/>
        <end position="347"/>
    </location>
</feature>
<feature type="region of interest" description="Disordered" evidence="5">
    <location>
        <begin position="558"/>
        <end position="619"/>
    </location>
</feature>
<feature type="region of interest" description="Disordered" evidence="5">
    <location>
        <begin position="881"/>
        <end position="937"/>
    </location>
</feature>
<feature type="region of interest" description="Disordered" evidence="5">
    <location>
        <begin position="1254"/>
        <end position="1303"/>
    </location>
</feature>
<feature type="coiled-coil region" evidence="2">
    <location>
        <begin position="310"/>
        <end position="338"/>
    </location>
</feature>
<feature type="coiled-coil region" evidence="2">
    <location>
        <begin position="591"/>
        <end position="629"/>
    </location>
</feature>
<feature type="compositionally biased region" description="Pro residues" evidence="5">
    <location>
        <begin position="1"/>
        <end position="16"/>
    </location>
</feature>
<feature type="compositionally biased region" description="Low complexity" evidence="5">
    <location>
        <begin position="17"/>
        <end position="40"/>
    </location>
</feature>
<feature type="compositionally biased region" description="Low complexity" evidence="5">
    <location>
        <begin position="52"/>
        <end position="63"/>
    </location>
</feature>
<feature type="compositionally biased region" description="Low complexity" evidence="5">
    <location>
        <begin position="73"/>
        <end position="90"/>
    </location>
</feature>
<feature type="compositionally biased region" description="Low complexity" evidence="5">
    <location>
        <begin position="102"/>
        <end position="114"/>
    </location>
</feature>
<feature type="compositionally biased region" description="Low complexity" evidence="5">
    <location>
        <begin position="148"/>
        <end position="161"/>
    </location>
</feature>
<feature type="compositionally biased region" description="Low complexity" evidence="5">
    <location>
        <begin position="195"/>
        <end position="207"/>
    </location>
</feature>
<feature type="compositionally biased region" description="Low complexity" evidence="5">
    <location>
        <begin position="222"/>
        <end position="236"/>
    </location>
</feature>
<feature type="compositionally biased region" description="Pro residues" evidence="5">
    <location>
        <begin position="283"/>
        <end position="310"/>
    </location>
</feature>
<feature type="compositionally biased region" description="Low complexity" evidence="5">
    <location>
        <begin position="311"/>
        <end position="333"/>
    </location>
</feature>
<feature type="compositionally biased region" description="Polar residues" evidence="5">
    <location>
        <begin position="334"/>
        <end position="343"/>
    </location>
</feature>
<feature type="compositionally biased region" description="Low complexity" evidence="5">
    <location>
        <begin position="558"/>
        <end position="610"/>
    </location>
</feature>
<feature type="compositionally biased region" description="Low complexity" evidence="5">
    <location>
        <begin position="881"/>
        <end position="928"/>
    </location>
</feature>
<feature type="compositionally biased region" description="Low complexity" evidence="5">
    <location>
        <begin position="1261"/>
        <end position="1291"/>
    </location>
</feature>
<feature type="sequence conflict" description="In Ref. 1; AAN46880 and 3; AAL83292." evidence="7" ref="1 3">
    <location>
        <begin position="602"/>
        <end position="607"/>
    </location>
</feature>